<accession>A6MMD4</accession>
<geneLocation type="chloroplast"/>
<reference key="1">
    <citation type="journal article" date="2007" name="Mol. Phylogenet. Evol.">
        <title>Phylogenetic and evolutionary implications of complete chloroplast genome sequences of four early-diverging angiosperms: Buxus (Buxaceae), Chloranthus (Chloranthaceae), Dioscorea (Dioscoreaceae), and Illicium (Schisandraceae).</title>
        <authorList>
            <person name="Hansen D.R."/>
            <person name="Dastidar S.G."/>
            <person name="Cai Z."/>
            <person name="Penaflor C."/>
            <person name="Kuehl J.V."/>
            <person name="Boore J.L."/>
            <person name="Jansen R.K."/>
        </authorList>
    </citation>
    <scope>NUCLEOTIDE SEQUENCE [LARGE SCALE GENOMIC DNA]</scope>
</reference>
<dbReference type="EMBL" id="EF380352">
    <property type="protein sequence ID" value="ABQ43272.1"/>
    <property type="molecule type" value="Genomic_DNA"/>
</dbReference>
<dbReference type="RefSeq" id="YP_001294110.1">
    <property type="nucleotide sequence ID" value="NC_009598.1"/>
</dbReference>
<dbReference type="SMR" id="A6MMD4"/>
<dbReference type="GeneID" id="5236542"/>
<dbReference type="GO" id="GO:0009706">
    <property type="term" value="C:chloroplast inner membrane"/>
    <property type="evidence" value="ECO:0007669"/>
    <property type="project" value="UniProtKB-SubCell"/>
</dbReference>
<dbReference type="GO" id="GO:0015297">
    <property type="term" value="F:antiporter activity"/>
    <property type="evidence" value="ECO:0007669"/>
    <property type="project" value="UniProtKB-KW"/>
</dbReference>
<dbReference type="GO" id="GO:0015078">
    <property type="term" value="F:proton transmembrane transporter activity"/>
    <property type="evidence" value="ECO:0007669"/>
    <property type="project" value="UniProtKB-UniRule"/>
</dbReference>
<dbReference type="GO" id="GO:0006813">
    <property type="term" value="P:potassium ion transport"/>
    <property type="evidence" value="ECO:0007669"/>
    <property type="project" value="UniProtKB-UniRule"/>
</dbReference>
<dbReference type="HAMAP" id="MF_01308">
    <property type="entry name" value="CemA_PxcA"/>
    <property type="match status" value="1"/>
</dbReference>
<dbReference type="InterPro" id="IPR004282">
    <property type="entry name" value="CemA"/>
</dbReference>
<dbReference type="PANTHER" id="PTHR33650:SF2">
    <property type="entry name" value="CHLOROPLAST ENVELOPE MEMBRANE PROTEIN"/>
    <property type="match status" value="1"/>
</dbReference>
<dbReference type="PANTHER" id="PTHR33650">
    <property type="entry name" value="CHLOROPLAST ENVELOPE MEMBRANE PROTEIN-RELATED"/>
    <property type="match status" value="1"/>
</dbReference>
<dbReference type="Pfam" id="PF03040">
    <property type="entry name" value="CemA"/>
    <property type="match status" value="1"/>
</dbReference>
<sequence length="242" mass="28674">MKRAKKAKKEKKESTPLPFPYLASIVLLPWWISLSFKKCFEPWVTHWCNTRQSKFFLNDIQEKGTLERFIELEELFLLDKIIKEYYPDTHIQRLWIRIHKETIQLVKIHNEDHNHIIFCLSTNIISFTILSGYSILGNEELFILNSWVQEFLYNLSDTIKAFSILLFTDLCIGFHSPHGWELMIGSIYKIFGFAHNDQVISGFVSTFPVFLDTFFKYLIFRHLNRVSPSLVVIYDSINEELI</sequence>
<comment type="function">
    <text evidence="1">Contributes to K(+)/H(+) antiport activity by supporting proton efflux to control proton extrusion and homeostasis in chloroplasts in a light-dependent manner to modulate photosynthesis. Prevents excessive induction of non-photochemical quenching (NPQ) under continuous-light conditions. Indirectly promotes efficient inorganic carbon uptake into chloroplasts.</text>
</comment>
<comment type="catalytic activity">
    <reaction evidence="1">
        <text>K(+)(in) + H(+)(out) = K(+)(out) + H(+)(in)</text>
        <dbReference type="Rhea" id="RHEA:29467"/>
        <dbReference type="ChEBI" id="CHEBI:15378"/>
        <dbReference type="ChEBI" id="CHEBI:29103"/>
    </reaction>
</comment>
<comment type="subcellular location">
    <subcellularLocation>
        <location evidence="1">Plastid</location>
        <location evidence="1">Chloroplast inner membrane</location>
        <topology evidence="1">Multi-pass membrane protein</topology>
    </subcellularLocation>
</comment>
<comment type="similarity">
    <text evidence="1 2">Belongs to the CemA family.</text>
</comment>
<protein>
    <recommendedName>
        <fullName evidence="1">Potassium/proton antiporter CemA</fullName>
    </recommendedName>
    <alternativeName>
        <fullName evidence="1">Chloroplast envelope membrane protein A</fullName>
        <shortName evidence="1">CemA</shortName>
    </alternativeName>
</protein>
<proteinExistence type="inferred from homology"/>
<evidence type="ECO:0000255" key="1">
    <source>
        <dbReference type="HAMAP-Rule" id="MF_01308"/>
    </source>
</evidence>
<evidence type="ECO:0000305" key="2"/>
<name>CEMA_CHLSC</name>
<keyword id="KW-0050">Antiport</keyword>
<keyword id="KW-0150">Chloroplast</keyword>
<keyword id="KW-0375">Hydrogen ion transport</keyword>
<keyword id="KW-0406">Ion transport</keyword>
<keyword id="KW-0472">Membrane</keyword>
<keyword id="KW-0934">Plastid</keyword>
<keyword id="KW-1001">Plastid inner membrane</keyword>
<keyword id="KW-0630">Potassium</keyword>
<keyword id="KW-0633">Potassium transport</keyword>
<keyword id="KW-0812">Transmembrane</keyword>
<keyword id="KW-1133">Transmembrane helix</keyword>
<keyword id="KW-0813">Transport</keyword>
<organism>
    <name type="scientific">Chloranthus spicatus</name>
    <name type="common">Chulantree</name>
    <name type="synonym">Nigrina spicata</name>
    <dbReference type="NCBI Taxonomy" id="13006"/>
    <lineage>
        <taxon>Eukaryota</taxon>
        <taxon>Viridiplantae</taxon>
        <taxon>Streptophyta</taxon>
        <taxon>Embryophyta</taxon>
        <taxon>Tracheophyta</taxon>
        <taxon>Spermatophyta</taxon>
        <taxon>Magnoliopsida</taxon>
        <taxon>Chloranthales</taxon>
        <taxon>Chloranthaceae</taxon>
        <taxon>Chloranthus</taxon>
    </lineage>
</organism>
<feature type="chain" id="PRO_0000323239" description="Potassium/proton antiporter CemA">
    <location>
        <begin position="1"/>
        <end position="242"/>
    </location>
</feature>
<feature type="transmembrane region" description="Helical" evidence="1">
    <location>
        <begin position="116"/>
        <end position="136"/>
    </location>
</feature>
<feature type="transmembrane region" description="Helical" evidence="1">
    <location>
        <begin position="200"/>
        <end position="220"/>
    </location>
</feature>
<gene>
    <name evidence="1" type="primary">cemA</name>
</gene>